<comment type="function">
    <text evidence="1">Self-assembles to form an icosahedral T=3 immature capsid.</text>
</comment>
<comment type="subcellular location">
    <subcellularLocation>
        <location evidence="1">Virion</location>
    </subcellularLocation>
    <text evidence="1">Immature capsid.</text>
</comment>
<comment type="PTM">
    <text evidence="1">Specific enzymatic cleavages by the host yield mature proteins.</text>
</comment>
<comment type="similarity">
    <text evidence="3">Belongs to the astroviridae capsid polyprotein family.</text>
</comment>
<reference key="1">
    <citation type="journal article" date="2000" name="J. Virol.">
        <title>Avian nephritis virus (ANV) as a new member of the family Astroviridae and construction of infectious ANV cDNA.</title>
        <authorList>
            <person name="Imada T."/>
            <person name="Yamaguchi S."/>
            <person name="Mase M."/>
            <person name="Tsukamoto K."/>
            <person name="Kubo M."/>
            <person name="Morooka A."/>
        </authorList>
    </citation>
    <scope>NUCLEOTIDE SEQUENCE [GENOMIC RNA]</scope>
</reference>
<gene>
    <name type="ORF">ORF2</name>
</gene>
<protein>
    <recommendedName>
        <fullName>Capsid polyprotein VP90</fullName>
    </recommendedName>
</protein>
<evidence type="ECO:0000250" key="1">
    <source>
        <dbReference type="UniProtKB" id="Q9IFX1"/>
    </source>
</evidence>
<evidence type="ECO:0000256" key="2">
    <source>
        <dbReference type="SAM" id="MobiDB-lite"/>
    </source>
</evidence>
<evidence type="ECO:0000305" key="3"/>
<organismHost>
    <name type="scientific">Gallus gallus</name>
    <name type="common">Chicken</name>
    <dbReference type="NCBI Taxonomy" id="9031"/>
</organismHost>
<organismHost>
    <name type="scientific">Meleagris gallopavo</name>
    <name type="common">Wild turkey</name>
    <dbReference type="NCBI Taxonomy" id="9103"/>
</organismHost>
<keyword id="KW-0167">Capsid protein</keyword>
<keyword id="KW-0945">Host-virus interaction</keyword>
<keyword id="KW-1087">Inhibition of host complement factors by virus</keyword>
<keyword id="KW-1140">T=1 icosahedral capsid protein</keyword>
<keyword id="KW-0899">Viral immunoevasion</keyword>
<keyword id="KW-0946">Virion</keyword>
<proteinExistence type="inferred from homology"/>
<name>CAPSD_ANV1</name>
<sequence length="683" mass="73909">MAGGATAPAGAKPKQPKQKQKKPSSQARKKPSQKQKAMKPVKQELRKVEKQVRVLKARTNGPKVNDTMKTTVTVGTLVGQTQSGLNRQLRVSFNPLLMKSTEGGSTTPLSIRASMYEMWKPLSVEIFATPLSGFSSVVGSVGFMVITLNGLEASADSIDTIKARRHVQMALGRPYRLKLSARELAGPREGWWLVDTSEAPADAYGPAVDLMLAYATENLLGTSSGSTTSYTGTLWQVEMRVTYAFSTYNPKPGLQTLVSQSITGGQTVTIQPSPDDGSLIMTTNSQQVLALLTPRVAGQRKGKSQTIWAIAGSAVDAAATVLGPWGYLLKGGFWLVRLIFGGSSARNTTTRQYQIYPSVESALTDQPIFGNSTGTQSVTVPICHITEVVNPNAESNNLPPPTTGAQPQPQPPAPIEEILLPLAELTGQPGVPPLYTFDGSSYTPPTNWLGSTILLTGIPAHKRVTGNLAKFGVTNLQMSKVAATALEIYDFTDFGVFFGTGSYLSEGGIHTGKTLIYSLMSGQTPNPWLAANQSGTTWYMPSWAGFPQPGQGDYFLQMQDVTDTTTHTTSVNVYFLVAYRQSRRLIAFFNTGGTARPAPTSMLCLYNVDCGRAPQTPYPTFQSTLQSLNQIGVDAKSDPDSDDDISLAGSVIGDEFDSVDHLEREREDLMRRLRDLDLRRFQI</sequence>
<accession>Q9JGF1</accession>
<organism>
    <name type="scientific">Avian nephritis virus 1</name>
    <name type="common">ANV-1</name>
    <dbReference type="NCBI Taxonomy" id="336960"/>
    <lineage>
        <taxon>Viruses</taxon>
        <taxon>Riboviria</taxon>
        <taxon>Orthornavirae</taxon>
        <taxon>Pisuviricota</taxon>
        <taxon>Stelpaviricetes</taxon>
        <taxon>Stellavirales</taxon>
        <taxon>Astroviridae</taxon>
        <taxon>Avastrovirus</taxon>
        <taxon>Avastrovirus 2</taxon>
    </lineage>
</organism>
<dbReference type="EMBL" id="AB033998">
    <property type="protein sequence ID" value="BAA92849.1"/>
    <property type="molecule type" value="Genomic_RNA"/>
</dbReference>
<dbReference type="SMR" id="Q9JGF1"/>
<dbReference type="KEGG" id="vg:944348"/>
<dbReference type="Proteomes" id="UP000007440">
    <property type="component" value="Segment"/>
</dbReference>
<dbReference type="GO" id="GO:0039615">
    <property type="term" value="C:T=1 icosahedral viral capsid"/>
    <property type="evidence" value="ECO:0007669"/>
    <property type="project" value="UniProtKB-KW"/>
</dbReference>
<dbReference type="GO" id="GO:0042784">
    <property type="term" value="P:symbiont-mediated suppression of host complement activation"/>
    <property type="evidence" value="ECO:0007669"/>
    <property type="project" value="UniProtKB-KW"/>
</dbReference>
<dbReference type="Gene3D" id="2.60.120.20">
    <property type="match status" value="1"/>
</dbReference>
<dbReference type="InterPro" id="IPR004337">
    <property type="entry name" value="Astro_capsid_N"/>
</dbReference>
<dbReference type="InterPro" id="IPR029053">
    <property type="entry name" value="Viral_coat"/>
</dbReference>
<dbReference type="Pfam" id="PF03115">
    <property type="entry name" value="Astro_capsid_N"/>
    <property type="match status" value="1"/>
</dbReference>
<feature type="chain" id="PRO_0000320244" description="Capsid polyprotein VP90">
    <location>
        <begin position="1"/>
        <end position="683"/>
    </location>
</feature>
<feature type="region of interest" description="Disordered" evidence="2">
    <location>
        <begin position="1"/>
        <end position="45"/>
    </location>
</feature>
<feature type="region of interest" description="Disordered" evidence="2">
    <location>
        <begin position="391"/>
        <end position="413"/>
    </location>
</feature>
<feature type="compositionally biased region" description="Low complexity" evidence="2">
    <location>
        <begin position="1"/>
        <end position="13"/>
    </location>
</feature>
<feature type="compositionally biased region" description="Basic residues" evidence="2">
    <location>
        <begin position="14"/>
        <end position="39"/>
    </location>
</feature>
<feature type="compositionally biased region" description="Pro residues" evidence="2">
    <location>
        <begin position="398"/>
        <end position="413"/>
    </location>
</feature>